<feature type="signal peptide" evidence="4">
    <location>
        <begin position="1"/>
        <end position="20"/>
    </location>
</feature>
<feature type="chain" id="PRO_0000454797" description="Low affinity immunoglobulin gamma Fc region receptor III-B" evidence="4">
    <location>
        <begin position="21"/>
        <end position="253"/>
    </location>
</feature>
<feature type="topological domain" description="Extracellular" evidence="8">
    <location>
        <begin position="21"/>
        <end position="207"/>
    </location>
</feature>
<feature type="transmembrane region" description="Helical" evidence="4">
    <location>
        <begin position="208"/>
        <end position="226"/>
    </location>
</feature>
<feature type="topological domain" description="Cytoplasmic" evidence="8">
    <location>
        <begin position="227"/>
        <end position="253"/>
    </location>
</feature>
<feature type="domain" description="Ig-like C2-type 1" evidence="5">
    <location>
        <begin position="24"/>
        <end position="105"/>
    </location>
</feature>
<feature type="domain" description="Ig-like C2-type 2" evidence="5">
    <location>
        <begin position="120"/>
        <end position="189"/>
    </location>
</feature>
<feature type="glycosylation site" description="N-linked (GlcNAc...) asparagine" evidence="6">
    <location>
        <position position="56"/>
    </location>
</feature>
<feature type="glycosylation site" description="N-linked (GlcNAc...) asparagine" evidence="6">
    <location>
        <position position="63"/>
    </location>
</feature>
<feature type="glycosylation site" description="N-linked (GlcNAc...) asparagine" evidence="6">
    <location>
        <position position="165"/>
    </location>
</feature>
<feature type="glycosylation site" description="N-linked (GlcNAc...) asparagine" evidence="6">
    <location>
        <position position="180"/>
    </location>
</feature>
<feature type="disulfide bond" evidence="5">
    <location>
        <begin position="47"/>
        <end position="89"/>
    </location>
</feature>
<feature type="disulfide bond" evidence="5">
    <location>
        <begin position="128"/>
        <end position="172"/>
    </location>
</feature>
<proteinExistence type="inferred from homology"/>
<name>FCG3B_RABIT</name>
<sequence length="253" mass="27974">MGQPLPPVALLLLVSASSRAADVPKALVLLDPPWASVLKDDHVTLKCQGLHPAGDNTTQWLHNGSLLSSQAPAYTITAARAEDGGEYRCQTGLSSLSDPVQLRVHLGWLVLQAPRWVFQEGEPIQLRCHSWKNNKLHKVTYLQNGRGLRYFHQNSDLHIPEATRNHSGSYFCRGLIRHHNVSSETVTITVQGPANPVVSSSVLPWHQIAFCLVMGLLLAADTGLYFSVQRDLRSSQRARKEHTLGWSLGSQDK</sequence>
<reference key="1">
    <citation type="journal article" date="2011" name="Nature">
        <title>A high-resolution map of human evolutionary constraint using 29 mammals.</title>
        <authorList>
            <person name="Lindblad-Toh K."/>
            <person name="Garber M."/>
            <person name="Zuk O."/>
            <person name="Lin M.F."/>
            <person name="Parker B.J."/>
            <person name="Washietl S."/>
            <person name="Kheradpour P."/>
            <person name="Ernst J."/>
            <person name="Jordan G."/>
            <person name="Mauceli E."/>
            <person name="Ward L.D."/>
            <person name="Lowe C.B."/>
            <person name="Holloway A.K."/>
            <person name="Clamp M."/>
            <person name="Gnerre S."/>
            <person name="Alfoldi J."/>
            <person name="Beal K."/>
            <person name="Chang J."/>
            <person name="Clawson H."/>
            <person name="Cuff J."/>
            <person name="Di Palma F."/>
            <person name="Fitzgerald S."/>
            <person name="Flicek P."/>
            <person name="Guttman M."/>
            <person name="Hubisz M.J."/>
            <person name="Jaffe D.B."/>
            <person name="Jungreis I."/>
            <person name="Kent W.J."/>
            <person name="Kostka D."/>
            <person name="Lara M."/>
            <person name="Martins A.L."/>
            <person name="Massingham T."/>
            <person name="Moltke I."/>
            <person name="Raney B.J."/>
            <person name="Rasmussen M.D."/>
            <person name="Robinson J."/>
            <person name="Stark A."/>
            <person name="Vilella A.J."/>
            <person name="Wen J."/>
            <person name="Xie X."/>
            <person name="Zody M.C."/>
            <person name="Baldwin J."/>
            <person name="Bloom T."/>
            <person name="Chin C.W."/>
            <person name="Heiman D."/>
            <person name="Nicol R."/>
            <person name="Nusbaum C."/>
            <person name="Young S."/>
            <person name="Wilkinson J."/>
            <person name="Worley K.C."/>
            <person name="Kovar C.L."/>
            <person name="Muzny D.M."/>
            <person name="Gibbs R.A."/>
            <person name="Cree A."/>
            <person name="Dihn H.H."/>
            <person name="Fowler G."/>
            <person name="Jhangiani S."/>
            <person name="Joshi V."/>
            <person name="Lee S."/>
            <person name="Lewis L.R."/>
            <person name="Nazareth L.V."/>
            <person name="Okwuonu G."/>
            <person name="Santibanez J."/>
            <person name="Warren W.C."/>
            <person name="Mardis E.R."/>
            <person name="Weinstock G.M."/>
            <person name="Wilson R.K."/>
            <person name="Delehaunty K."/>
            <person name="Dooling D."/>
            <person name="Fronik C."/>
            <person name="Fulton L."/>
            <person name="Fulton B."/>
            <person name="Graves T."/>
            <person name="Minx P."/>
            <person name="Sodergren E."/>
            <person name="Birney E."/>
            <person name="Margulies E.H."/>
            <person name="Herrero J."/>
            <person name="Green E.D."/>
            <person name="Haussler D."/>
            <person name="Siepel A."/>
            <person name="Goldman N."/>
            <person name="Pollard K.S."/>
            <person name="Pedersen J.S."/>
            <person name="Lander E.S."/>
            <person name="Kellis M."/>
        </authorList>
    </citation>
    <scope>NUCLEOTIDE SEQUENCE [LARGE SCALE GENOMIC DNA]</scope>
    <source>
        <strain>Thorbecke</strain>
    </source>
</reference>
<reference key="2">
    <citation type="journal article" date="1994" name="Bull. World Health Organ.">
        <title>Nomenclature of Fc receptors. IUIS/WHO Subcommittee on Nomenclature of Fc receptors.</title>
        <authorList>
            <person name="Conrad D."/>
            <person name="Cooper M."/>
            <person name="Fridman W.H."/>
            <person name="Kinet J.P."/>
            <person name="Ravetch J."/>
        </authorList>
    </citation>
    <scope>NOMENCLATURE</scope>
</reference>
<reference key="3">
    <citation type="journal article" date="2021" name="Antib Ther">
        <title>Cross-species higher sensitivities of FcgammaRIIIA/FcgammaRIV to afucosylated IgG for enhanced ADCC.</title>
        <authorList>
            <person name="Mao C."/>
            <person name="Near R."/>
            <person name="Zhong X."/>
            <person name="Gao W."/>
        </authorList>
    </citation>
    <scope>FUNCTION</scope>
</reference>
<comment type="function">
    <text evidence="1 2 3 7">Receptor for the invariable Fc fragment of immunoglobulin gamma (IgG) (By similarity). Optimally activated upon binding of clustered antigen-IgG complexes displayed on cell surfaces, triggers lysis of antibody-coated cells, a process known as antibody-dependent cellular cytotoxicity (ADCC). Does not bind free monomeric IgG, thus avoiding inappropriate effector cell activation in the absence of antigenic trigger. Mediates IgG effector functions on natural killer (NK) cells. Binds antigen-IgG complexes generated upon infection and triggers NK cell-dependent cytokine production and degranulation to limit viral load and propagation (By similarity). Fc-binding subunit that associates with FCER1G adapters to form functional signaling complexes. Following the engagement of antigen-IgG complexes, triggers phosphorylation of immunoreceptor tyrosine-based activation motif (ITAM)-containing adapters with subsequent activation of phosphatidylinositol 3-kinase signaling and sustained elevation of intracellular calcium that ultimately drive NK cell activation (By similarity). Mediates enhanced ADCC in response to afucosylated IgGs (PubMed:34485821).</text>
</comment>
<comment type="subunit">
    <text evidence="2">Forms a heterooligomeric complex with ITAM-containing signaling subunits FCER1G. Interacts (via transmembrane domain) with signaling subunits; this interaction is a prerequisite for receptor complex expression on the cell surface and intracellular signal transduction. Binds the Fc region of antigen-complexed IgG.</text>
</comment>
<comment type="subcellular location">
    <subcellularLocation>
        <location evidence="2">Cell membrane</location>
        <topology evidence="4">Single-pass membrane protein</topology>
    </subcellularLocation>
</comment>
<keyword id="KW-1003">Cell membrane</keyword>
<keyword id="KW-1015">Disulfide bond</keyword>
<keyword id="KW-0325">Glycoprotein</keyword>
<keyword id="KW-0390">IgG-binding protein</keyword>
<keyword id="KW-0391">Immunity</keyword>
<keyword id="KW-0393">Immunoglobulin domain</keyword>
<keyword id="KW-0472">Membrane</keyword>
<keyword id="KW-0675">Receptor</keyword>
<keyword id="KW-1185">Reference proteome</keyword>
<keyword id="KW-0677">Repeat</keyword>
<keyword id="KW-0732">Signal</keyword>
<keyword id="KW-0812">Transmembrane</keyword>
<keyword id="KW-1133">Transmembrane helix</keyword>
<evidence type="ECO:0000250" key="1">
    <source>
        <dbReference type="UniProtKB" id="A0A0B4J1G0"/>
    </source>
</evidence>
<evidence type="ECO:0000250" key="2">
    <source>
        <dbReference type="UniProtKB" id="P08637"/>
    </source>
</evidence>
<evidence type="ECO:0000250" key="3">
    <source>
        <dbReference type="UniProtKB" id="Q28942"/>
    </source>
</evidence>
<evidence type="ECO:0000255" key="4"/>
<evidence type="ECO:0000255" key="5">
    <source>
        <dbReference type="PROSITE-ProRule" id="PRU00114"/>
    </source>
</evidence>
<evidence type="ECO:0000255" key="6">
    <source>
        <dbReference type="PROSITE-ProRule" id="PRU00498"/>
    </source>
</evidence>
<evidence type="ECO:0000269" key="7">
    <source>
    </source>
</evidence>
<evidence type="ECO:0000305" key="8"/>
<dbReference type="EMBL" id="AAGW02000253">
    <property type="status" value="NOT_ANNOTATED_CDS"/>
    <property type="molecule type" value="Genomic_DNA"/>
</dbReference>
<dbReference type="RefSeq" id="XP_002715295.1">
    <property type="nucleotide sequence ID" value="XM_002715249.3"/>
</dbReference>
<dbReference type="SMR" id="G1T7E7"/>
<dbReference type="FunCoup" id="G1T7E7">
    <property type="interactions" value="88"/>
</dbReference>
<dbReference type="GlyCosmos" id="G1T7E7">
    <property type="glycosylation" value="4 sites, No reported glycans"/>
</dbReference>
<dbReference type="PaxDb" id="9986-ENSOCUP00000012417"/>
<dbReference type="Ensembl" id="ENSOCUT00000014441.4">
    <property type="protein sequence ID" value="ENSOCUP00000012417.3"/>
    <property type="gene ID" value="ENSOCUG00000027815.3"/>
</dbReference>
<dbReference type="KEGG" id="ocu:100338913"/>
<dbReference type="eggNOG" id="ENOG502RU1M">
    <property type="taxonomic scope" value="Eukaryota"/>
</dbReference>
<dbReference type="GeneTree" id="ENSGT01050000244808"/>
<dbReference type="HOGENOM" id="CLU_023383_1_0_1"/>
<dbReference type="InParanoid" id="G1T7E7"/>
<dbReference type="OMA" id="GDNSTQW"/>
<dbReference type="OrthoDB" id="8917564at2759"/>
<dbReference type="TreeFam" id="TF335097"/>
<dbReference type="Proteomes" id="UP000001811">
    <property type="component" value="Chromosome 13"/>
</dbReference>
<dbReference type="Bgee" id="ENSOCUG00000027815">
    <property type="expression patterns" value="Expressed in blood and 17 other cell types or tissues"/>
</dbReference>
<dbReference type="GO" id="GO:0009897">
    <property type="term" value="C:external side of plasma membrane"/>
    <property type="evidence" value="ECO:0007669"/>
    <property type="project" value="TreeGrafter"/>
</dbReference>
<dbReference type="GO" id="GO:0019864">
    <property type="term" value="F:IgG binding"/>
    <property type="evidence" value="ECO:0007669"/>
    <property type="project" value="UniProtKB-KW"/>
</dbReference>
<dbReference type="GO" id="GO:0019770">
    <property type="term" value="F:IgG receptor activity"/>
    <property type="evidence" value="ECO:0007669"/>
    <property type="project" value="TreeGrafter"/>
</dbReference>
<dbReference type="GO" id="GO:0001788">
    <property type="term" value="P:antibody-dependent cellular cytotoxicity"/>
    <property type="evidence" value="ECO:0007669"/>
    <property type="project" value="TreeGrafter"/>
</dbReference>
<dbReference type="CDD" id="cd05752">
    <property type="entry name" value="Ig1_FcgammaR_like"/>
    <property type="match status" value="1"/>
</dbReference>
<dbReference type="CDD" id="cd05753">
    <property type="entry name" value="Ig2_FcgammaR_like"/>
    <property type="match status" value="1"/>
</dbReference>
<dbReference type="FunFam" id="2.60.40.10:FF:000217">
    <property type="entry name" value="High affinity immunoglobulin gamma Fc receptor I"/>
    <property type="match status" value="1"/>
</dbReference>
<dbReference type="FunFam" id="2.60.40.10:FF:000356">
    <property type="entry name" value="Low affinity immunoglobulin gamma Fc region receptor III-A"/>
    <property type="match status" value="1"/>
</dbReference>
<dbReference type="Gene3D" id="2.60.40.10">
    <property type="entry name" value="Immunoglobulins"/>
    <property type="match status" value="2"/>
</dbReference>
<dbReference type="InterPro" id="IPR007110">
    <property type="entry name" value="Ig-like_dom"/>
</dbReference>
<dbReference type="InterPro" id="IPR036179">
    <property type="entry name" value="Ig-like_dom_sf"/>
</dbReference>
<dbReference type="InterPro" id="IPR013783">
    <property type="entry name" value="Ig-like_fold"/>
</dbReference>
<dbReference type="InterPro" id="IPR050488">
    <property type="entry name" value="Ig_Fc_receptor"/>
</dbReference>
<dbReference type="InterPro" id="IPR003599">
    <property type="entry name" value="Ig_sub"/>
</dbReference>
<dbReference type="InterPro" id="IPR003598">
    <property type="entry name" value="Ig_sub2"/>
</dbReference>
<dbReference type="PANTHER" id="PTHR11481">
    <property type="entry name" value="IMMUNOGLOBULIN FC RECEPTOR"/>
    <property type="match status" value="1"/>
</dbReference>
<dbReference type="PANTHER" id="PTHR11481:SF103">
    <property type="entry name" value="LOW AFFINITY IMMUNOGLOBULIN GAMMA FC REGION RECEPTOR III-A-RELATED"/>
    <property type="match status" value="1"/>
</dbReference>
<dbReference type="Pfam" id="PF13895">
    <property type="entry name" value="Ig_2"/>
    <property type="match status" value="2"/>
</dbReference>
<dbReference type="SMART" id="SM00409">
    <property type="entry name" value="IG"/>
    <property type="match status" value="2"/>
</dbReference>
<dbReference type="SMART" id="SM00408">
    <property type="entry name" value="IGc2"/>
    <property type="match status" value="2"/>
</dbReference>
<dbReference type="SUPFAM" id="SSF48726">
    <property type="entry name" value="Immunoglobulin"/>
    <property type="match status" value="2"/>
</dbReference>
<dbReference type="PROSITE" id="PS50835">
    <property type="entry name" value="IG_LIKE"/>
    <property type="match status" value="2"/>
</dbReference>
<accession>G1T7E7</accession>
<protein>
    <recommendedName>
        <fullName>Low affinity immunoglobulin gamma Fc region receptor III-B</fullName>
        <shortName>IgG Fc receptor III-B</shortName>
    </recommendedName>
    <alternativeName>
        <fullName>Low affinity immunoglobulin gamma Fc region receptor III-A-like</fullName>
    </alternativeName>
    <cdAntigenName>CD16b</cdAntigenName>
</protein>
<organism>
    <name type="scientific">Oryctolagus cuniculus</name>
    <name type="common">Rabbit</name>
    <dbReference type="NCBI Taxonomy" id="9986"/>
    <lineage>
        <taxon>Eukaryota</taxon>
        <taxon>Metazoa</taxon>
        <taxon>Chordata</taxon>
        <taxon>Craniata</taxon>
        <taxon>Vertebrata</taxon>
        <taxon>Euteleostomi</taxon>
        <taxon>Mammalia</taxon>
        <taxon>Eutheria</taxon>
        <taxon>Euarchontoglires</taxon>
        <taxon>Glires</taxon>
        <taxon>Lagomorpha</taxon>
        <taxon>Leporidae</taxon>
        <taxon>Oryctolagus</taxon>
    </lineage>
</organism>
<gene>
    <name type="primary">FCGR3B</name>
</gene>